<name>AROC_ECTM1</name>
<comment type="function">
    <text evidence="1">Catalyzes the anti-1,4-elimination of the C-3 phosphate and the C-6 proR hydrogen from 5-enolpyruvylshikimate-3-phosphate (EPSP) to yield chorismate, which is the branch point compound that serves as the starting substrate for the three terminal pathways of aromatic amino acid biosynthesis. This reaction introduces a second double bond into the aromatic ring system.</text>
</comment>
<comment type="catalytic activity">
    <reaction evidence="1">
        <text>5-O-(1-carboxyvinyl)-3-phosphoshikimate = chorismate + phosphate</text>
        <dbReference type="Rhea" id="RHEA:21020"/>
        <dbReference type="ChEBI" id="CHEBI:29748"/>
        <dbReference type="ChEBI" id="CHEBI:43474"/>
        <dbReference type="ChEBI" id="CHEBI:57701"/>
        <dbReference type="EC" id="4.2.3.5"/>
    </reaction>
</comment>
<comment type="cofactor">
    <cofactor evidence="1">
        <name>FMNH2</name>
        <dbReference type="ChEBI" id="CHEBI:57618"/>
    </cofactor>
    <text evidence="1">Reduced FMN (FMNH(2)).</text>
</comment>
<comment type="pathway">
    <text evidence="1">Metabolic intermediate biosynthesis; chorismate biosynthesis; chorismate from D-erythrose 4-phosphate and phosphoenolpyruvate: step 7/7.</text>
</comment>
<comment type="subunit">
    <text evidence="1">Homotetramer.</text>
</comment>
<comment type="similarity">
    <text evidence="1">Belongs to the chorismate synthase family.</text>
</comment>
<sequence>MSGNTYGKLFTVTTAGESHGPALVAIVDGCPPGLELSLEDMQRDLDRRKPGTSRHTTQRQEDDVVEILSGVFEGKTTGCAIGLLIRNTDQKSKDYSAIKDLFRPAHADYTYHHKYGIRDYRGGGRSSARETAMRVAAGAIAKKYLATQGIQVRGYMSQLGPIEIPFKTWDSVEQNAFFSPDPDKVPALETYMDQLRRDQDSVGAKITVVAEGVMPGLGEPIFDRLDAELAHALMSINAVKGVEIGAGFASVSQRGTEHRDELTPEGFLSNNAGGILGGISSGQPIVAHLALKPTSSITTPGRSIDIDGNPVEVITKGRHDPCVGIRATPIAEAMMAIVLMDHLLRHRAQNAEVRVATPVLPQL</sequence>
<accession>A4XTH9</accession>
<keyword id="KW-0028">Amino-acid biosynthesis</keyword>
<keyword id="KW-0057">Aromatic amino acid biosynthesis</keyword>
<keyword id="KW-0274">FAD</keyword>
<keyword id="KW-0285">Flavoprotein</keyword>
<keyword id="KW-0288">FMN</keyword>
<keyword id="KW-0456">Lyase</keyword>
<keyword id="KW-0521">NADP</keyword>
<gene>
    <name evidence="1" type="primary">aroC</name>
    <name type="ordered locus">Pmen_1882</name>
</gene>
<reference key="1">
    <citation type="submission" date="2007-04" db="EMBL/GenBank/DDBJ databases">
        <title>Complete sequence of Pseudomonas mendocina ymp.</title>
        <authorList>
            <consortium name="US DOE Joint Genome Institute"/>
            <person name="Copeland A."/>
            <person name="Lucas S."/>
            <person name="Lapidus A."/>
            <person name="Barry K."/>
            <person name="Glavina del Rio T."/>
            <person name="Dalin E."/>
            <person name="Tice H."/>
            <person name="Pitluck S."/>
            <person name="Kiss H."/>
            <person name="Brettin T."/>
            <person name="Detter J.C."/>
            <person name="Bruce D."/>
            <person name="Han C."/>
            <person name="Schmutz J."/>
            <person name="Larimer F."/>
            <person name="Land M."/>
            <person name="Hauser L."/>
            <person name="Kyrpides N."/>
            <person name="Mikhailova N."/>
            <person name="Hersman L."/>
            <person name="Dubois J."/>
            <person name="Maurice P."/>
            <person name="Richardson P."/>
        </authorList>
    </citation>
    <scope>NUCLEOTIDE SEQUENCE [LARGE SCALE GENOMIC DNA]</scope>
    <source>
        <strain>ymp</strain>
    </source>
</reference>
<evidence type="ECO:0000255" key="1">
    <source>
        <dbReference type="HAMAP-Rule" id="MF_00300"/>
    </source>
</evidence>
<organism>
    <name type="scientific">Ectopseudomonas mendocina (strain ymp)</name>
    <name type="common">Pseudomonas mendocina</name>
    <dbReference type="NCBI Taxonomy" id="399739"/>
    <lineage>
        <taxon>Bacteria</taxon>
        <taxon>Pseudomonadati</taxon>
        <taxon>Pseudomonadota</taxon>
        <taxon>Gammaproteobacteria</taxon>
        <taxon>Pseudomonadales</taxon>
        <taxon>Pseudomonadaceae</taxon>
        <taxon>Ectopseudomonas</taxon>
    </lineage>
</organism>
<proteinExistence type="inferred from homology"/>
<feature type="chain" id="PRO_1000022530" description="Chorismate synthase">
    <location>
        <begin position="1"/>
        <end position="363"/>
    </location>
</feature>
<feature type="binding site" evidence="1">
    <location>
        <position position="48"/>
    </location>
    <ligand>
        <name>NADP(+)</name>
        <dbReference type="ChEBI" id="CHEBI:58349"/>
    </ligand>
</feature>
<feature type="binding site" evidence="1">
    <location>
        <position position="54"/>
    </location>
    <ligand>
        <name>NADP(+)</name>
        <dbReference type="ChEBI" id="CHEBI:58349"/>
    </ligand>
</feature>
<feature type="binding site" evidence="1">
    <location>
        <begin position="125"/>
        <end position="127"/>
    </location>
    <ligand>
        <name>FMN</name>
        <dbReference type="ChEBI" id="CHEBI:58210"/>
    </ligand>
</feature>
<feature type="binding site" evidence="1">
    <location>
        <begin position="237"/>
        <end position="238"/>
    </location>
    <ligand>
        <name>FMN</name>
        <dbReference type="ChEBI" id="CHEBI:58210"/>
    </ligand>
</feature>
<feature type="binding site" evidence="1">
    <location>
        <position position="277"/>
    </location>
    <ligand>
        <name>FMN</name>
        <dbReference type="ChEBI" id="CHEBI:58210"/>
    </ligand>
</feature>
<feature type="binding site" evidence="1">
    <location>
        <begin position="292"/>
        <end position="296"/>
    </location>
    <ligand>
        <name>FMN</name>
        <dbReference type="ChEBI" id="CHEBI:58210"/>
    </ligand>
</feature>
<feature type="binding site" evidence="1">
    <location>
        <position position="318"/>
    </location>
    <ligand>
        <name>FMN</name>
        <dbReference type="ChEBI" id="CHEBI:58210"/>
    </ligand>
</feature>
<dbReference type="EC" id="4.2.3.5" evidence="1"/>
<dbReference type="EMBL" id="CP000680">
    <property type="protein sequence ID" value="ABP84645.1"/>
    <property type="molecule type" value="Genomic_DNA"/>
</dbReference>
<dbReference type="SMR" id="A4XTH9"/>
<dbReference type="STRING" id="399739.Pmen_1882"/>
<dbReference type="KEGG" id="pmy:Pmen_1882"/>
<dbReference type="PATRIC" id="fig|399739.8.peg.1906"/>
<dbReference type="eggNOG" id="COG0082">
    <property type="taxonomic scope" value="Bacteria"/>
</dbReference>
<dbReference type="HOGENOM" id="CLU_034547_0_2_6"/>
<dbReference type="OrthoDB" id="9771806at2"/>
<dbReference type="UniPathway" id="UPA00053">
    <property type="reaction ID" value="UER00090"/>
</dbReference>
<dbReference type="GO" id="GO:0005829">
    <property type="term" value="C:cytosol"/>
    <property type="evidence" value="ECO:0007669"/>
    <property type="project" value="TreeGrafter"/>
</dbReference>
<dbReference type="GO" id="GO:0004107">
    <property type="term" value="F:chorismate synthase activity"/>
    <property type="evidence" value="ECO:0007669"/>
    <property type="project" value="UniProtKB-UniRule"/>
</dbReference>
<dbReference type="GO" id="GO:0010181">
    <property type="term" value="F:FMN binding"/>
    <property type="evidence" value="ECO:0007669"/>
    <property type="project" value="TreeGrafter"/>
</dbReference>
<dbReference type="GO" id="GO:0008652">
    <property type="term" value="P:amino acid biosynthetic process"/>
    <property type="evidence" value="ECO:0007669"/>
    <property type="project" value="UniProtKB-KW"/>
</dbReference>
<dbReference type="GO" id="GO:0009073">
    <property type="term" value="P:aromatic amino acid family biosynthetic process"/>
    <property type="evidence" value="ECO:0007669"/>
    <property type="project" value="UniProtKB-KW"/>
</dbReference>
<dbReference type="GO" id="GO:0009423">
    <property type="term" value="P:chorismate biosynthetic process"/>
    <property type="evidence" value="ECO:0007669"/>
    <property type="project" value="UniProtKB-UniRule"/>
</dbReference>
<dbReference type="CDD" id="cd07304">
    <property type="entry name" value="Chorismate_synthase"/>
    <property type="match status" value="1"/>
</dbReference>
<dbReference type="FunFam" id="3.60.150.10:FF:000001">
    <property type="entry name" value="Chorismate synthase"/>
    <property type="match status" value="1"/>
</dbReference>
<dbReference type="Gene3D" id="3.60.150.10">
    <property type="entry name" value="Chorismate synthase AroC"/>
    <property type="match status" value="1"/>
</dbReference>
<dbReference type="HAMAP" id="MF_00300">
    <property type="entry name" value="Chorismate_synth"/>
    <property type="match status" value="1"/>
</dbReference>
<dbReference type="InterPro" id="IPR000453">
    <property type="entry name" value="Chorismate_synth"/>
</dbReference>
<dbReference type="InterPro" id="IPR035904">
    <property type="entry name" value="Chorismate_synth_AroC_sf"/>
</dbReference>
<dbReference type="InterPro" id="IPR020541">
    <property type="entry name" value="Chorismate_synthase_CS"/>
</dbReference>
<dbReference type="NCBIfam" id="TIGR00033">
    <property type="entry name" value="aroC"/>
    <property type="match status" value="1"/>
</dbReference>
<dbReference type="NCBIfam" id="NF003793">
    <property type="entry name" value="PRK05382.1"/>
    <property type="match status" value="1"/>
</dbReference>
<dbReference type="PANTHER" id="PTHR21085">
    <property type="entry name" value="CHORISMATE SYNTHASE"/>
    <property type="match status" value="1"/>
</dbReference>
<dbReference type="PANTHER" id="PTHR21085:SF0">
    <property type="entry name" value="CHORISMATE SYNTHASE"/>
    <property type="match status" value="1"/>
</dbReference>
<dbReference type="Pfam" id="PF01264">
    <property type="entry name" value="Chorismate_synt"/>
    <property type="match status" value="1"/>
</dbReference>
<dbReference type="PIRSF" id="PIRSF001456">
    <property type="entry name" value="Chorismate_synth"/>
    <property type="match status" value="1"/>
</dbReference>
<dbReference type="SUPFAM" id="SSF103263">
    <property type="entry name" value="Chorismate synthase, AroC"/>
    <property type="match status" value="1"/>
</dbReference>
<dbReference type="PROSITE" id="PS00787">
    <property type="entry name" value="CHORISMATE_SYNTHASE_1"/>
    <property type="match status" value="1"/>
</dbReference>
<dbReference type="PROSITE" id="PS00788">
    <property type="entry name" value="CHORISMATE_SYNTHASE_2"/>
    <property type="match status" value="1"/>
</dbReference>
<dbReference type="PROSITE" id="PS00789">
    <property type="entry name" value="CHORISMATE_SYNTHASE_3"/>
    <property type="match status" value="1"/>
</dbReference>
<protein>
    <recommendedName>
        <fullName evidence="1">Chorismate synthase</fullName>
        <shortName evidence="1">CS</shortName>
        <ecNumber evidence="1">4.2.3.5</ecNumber>
    </recommendedName>
    <alternativeName>
        <fullName evidence="1">5-enolpyruvylshikimate-3-phosphate phospholyase</fullName>
    </alternativeName>
</protein>